<evidence type="ECO:0000250" key="1">
    <source>
        <dbReference type="UniProtKB" id="Q9BWU1"/>
    </source>
</evidence>
<evidence type="ECO:0000255" key="2">
    <source>
        <dbReference type="PROSITE-ProRule" id="PRU00159"/>
    </source>
</evidence>
<evidence type="ECO:0000255" key="3">
    <source>
        <dbReference type="PROSITE-ProRule" id="PRU10027"/>
    </source>
</evidence>
<evidence type="ECO:0000256" key="4">
    <source>
        <dbReference type="SAM" id="MobiDB-lite"/>
    </source>
</evidence>
<evidence type="ECO:0000305" key="5"/>
<organism>
    <name type="scientific">Mus musculus</name>
    <name type="common">Mouse</name>
    <dbReference type="NCBI Taxonomy" id="10090"/>
    <lineage>
        <taxon>Eukaryota</taxon>
        <taxon>Metazoa</taxon>
        <taxon>Chordata</taxon>
        <taxon>Craniata</taxon>
        <taxon>Vertebrata</taxon>
        <taxon>Euteleostomi</taxon>
        <taxon>Mammalia</taxon>
        <taxon>Eutheria</taxon>
        <taxon>Euarchontoglires</taxon>
        <taxon>Glires</taxon>
        <taxon>Rodentia</taxon>
        <taxon>Myomorpha</taxon>
        <taxon>Muroidea</taxon>
        <taxon>Muridae</taxon>
        <taxon>Murinae</taxon>
        <taxon>Mus</taxon>
        <taxon>Mus</taxon>
    </lineage>
</organism>
<keyword id="KW-0007">Acetylation</keyword>
<keyword id="KW-0067">ATP-binding</keyword>
<keyword id="KW-0963">Cytoplasm</keyword>
<keyword id="KW-0418">Kinase</keyword>
<keyword id="KW-0547">Nucleotide-binding</keyword>
<keyword id="KW-0539">Nucleus</keyword>
<keyword id="KW-0597">Phosphoprotein</keyword>
<keyword id="KW-1185">Reference proteome</keyword>
<keyword id="KW-0723">Serine/threonine-protein kinase</keyword>
<keyword id="KW-0808">Transferase</keyword>
<dbReference type="EC" id="2.7.11.22"/>
<dbReference type="EMBL" id="AK052818">
    <property type="protein sequence ID" value="BAC35159.1"/>
    <property type="molecule type" value="mRNA"/>
</dbReference>
<dbReference type="EMBL" id="AK122421">
    <property type="protein sequence ID" value="BAC65703.1"/>
    <property type="status" value="ALT_INIT"/>
    <property type="molecule type" value="mRNA"/>
</dbReference>
<dbReference type="CCDS" id="CCDS48545.1"/>
<dbReference type="RefSeq" id="NP_001161776.1">
    <property type="nucleotide sequence ID" value="NM_001168304.1"/>
</dbReference>
<dbReference type="SMR" id="Q8BWD8"/>
<dbReference type="ComplexPortal" id="CPX-3267">
    <property type="entry name" value="CKM complex variant 2"/>
</dbReference>
<dbReference type="FunCoup" id="Q8BWD8">
    <property type="interactions" value="5420"/>
</dbReference>
<dbReference type="IntAct" id="Q8BWD8">
    <property type="interactions" value="1"/>
</dbReference>
<dbReference type="MINT" id="Q8BWD8"/>
<dbReference type="STRING" id="10090.ENSMUSP00000040936"/>
<dbReference type="ChEMBL" id="CHEMBL4888455"/>
<dbReference type="PhosphoSitePlus" id="Q8BWD8"/>
<dbReference type="PaxDb" id="10090-ENSMUSP00000040936"/>
<dbReference type="ProteomicsDB" id="281298"/>
<dbReference type="Pumba" id="Q8BWD8"/>
<dbReference type="Antibodypedia" id="2087">
    <property type="antibodies" value="204 antibodies from 31 providers"/>
</dbReference>
<dbReference type="DNASU" id="78334"/>
<dbReference type="Ensembl" id="ENSMUST00000044672.11">
    <property type="protein sequence ID" value="ENSMUSP00000040936.5"/>
    <property type="gene ID" value="ENSMUSG00000038481.14"/>
</dbReference>
<dbReference type="GeneID" id="78334"/>
<dbReference type="KEGG" id="mmu:78334"/>
<dbReference type="UCSC" id="uc007ewt.2">
    <property type="organism name" value="mouse"/>
</dbReference>
<dbReference type="AGR" id="MGI:1925584"/>
<dbReference type="CTD" id="23097"/>
<dbReference type="MGI" id="MGI:1925584">
    <property type="gene designation" value="Cdk19"/>
</dbReference>
<dbReference type="VEuPathDB" id="HostDB:ENSMUSG00000038481"/>
<dbReference type="eggNOG" id="KOG0666">
    <property type="taxonomic scope" value="Eukaryota"/>
</dbReference>
<dbReference type="GeneTree" id="ENSGT00940000158213"/>
<dbReference type="HOGENOM" id="CLU_000288_181_6_1"/>
<dbReference type="InParanoid" id="Q8BWD8"/>
<dbReference type="OMA" id="IXIWAIG"/>
<dbReference type="OrthoDB" id="6284126at2759"/>
<dbReference type="PhylomeDB" id="Q8BWD8"/>
<dbReference type="TreeFam" id="TF101025"/>
<dbReference type="BioGRID-ORCS" id="78334">
    <property type="hits" value="1 hit in 79 CRISPR screens"/>
</dbReference>
<dbReference type="ChiTaRS" id="Cdk19">
    <property type="organism name" value="mouse"/>
</dbReference>
<dbReference type="PRO" id="PR:Q8BWD8"/>
<dbReference type="Proteomes" id="UP000000589">
    <property type="component" value="Chromosome 10"/>
</dbReference>
<dbReference type="RNAct" id="Q8BWD8">
    <property type="molecule type" value="protein"/>
</dbReference>
<dbReference type="Bgee" id="ENSMUSG00000038481">
    <property type="expression patterns" value="Expressed in otolith organ and 228 other cell types or tissues"/>
</dbReference>
<dbReference type="ExpressionAtlas" id="Q8BWD8">
    <property type="expression patterns" value="baseline and differential"/>
</dbReference>
<dbReference type="GO" id="GO:0005829">
    <property type="term" value="C:cytosol"/>
    <property type="evidence" value="ECO:0007669"/>
    <property type="project" value="Ensembl"/>
</dbReference>
<dbReference type="GO" id="GO:0005654">
    <property type="term" value="C:nucleoplasm"/>
    <property type="evidence" value="ECO:0007669"/>
    <property type="project" value="Ensembl"/>
</dbReference>
<dbReference type="GO" id="GO:0048471">
    <property type="term" value="C:perinuclear region of cytoplasm"/>
    <property type="evidence" value="ECO:0007669"/>
    <property type="project" value="UniProtKB-SubCell"/>
</dbReference>
<dbReference type="GO" id="GO:0005524">
    <property type="term" value="F:ATP binding"/>
    <property type="evidence" value="ECO:0007669"/>
    <property type="project" value="UniProtKB-KW"/>
</dbReference>
<dbReference type="GO" id="GO:0004693">
    <property type="term" value="F:cyclin-dependent protein serine/threonine kinase activity"/>
    <property type="evidence" value="ECO:0007669"/>
    <property type="project" value="UniProtKB-EC"/>
</dbReference>
<dbReference type="GO" id="GO:0106310">
    <property type="term" value="F:protein serine kinase activity"/>
    <property type="evidence" value="ECO:0007669"/>
    <property type="project" value="RHEA"/>
</dbReference>
<dbReference type="GO" id="GO:0071222">
    <property type="term" value="P:cellular response to lipopolysaccharide"/>
    <property type="evidence" value="ECO:0007669"/>
    <property type="project" value="Ensembl"/>
</dbReference>
<dbReference type="GO" id="GO:0043065">
    <property type="term" value="P:positive regulation of apoptotic process"/>
    <property type="evidence" value="ECO:0007669"/>
    <property type="project" value="Ensembl"/>
</dbReference>
<dbReference type="CDD" id="cd07867">
    <property type="entry name" value="STKc_CDC2L6"/>
    <property type="match status" value="1"/>
</dbReference>
<dbReference type="FunFam" id="1.10.510.10:FF:000088">
    <property type="entry name" value="cyclin-dependent kinase 8 isoform X1"/>
    <property type="match status" value="1"/>
</dbReference>
<dbReference type="FunFam" id="3.30.200.20:FF:000122">
    <property type="entry name" value="cyclin-dependent kinase 8 isoform X1"/>
    <property type="match status" value="1"/>
</dbReference>
<dbReference type="Gene3D" id="3.30.200.20">
    <property type="entry name" value="Phosphorylase Kinase, domain 1"/>
    <property type="match status" value="1"/>
</dbReference>
<dbReference type="Gene3D" id="1.10.510.10">
    <property type="entry name" value="Transferase(Phosphotransferase) domain 1"/>
    <property type="match status" value="1"/>
</dbReference>
<dbReference type="InterPro" id="IPR050108">
    <property type="entry name" value="CDK"/>
</dbReference>
<dbReference type="InterPro" id="IPR011009">
    <property type="entry name" value="Kinase-like_dom_sf"/>
</dbReference>
<dbReference type="InterPro" id="IPR000719">
    <property type="entry name" value="Prot_kinase_dom"/>
</dbReference>
<dbReference type="InterPro" id="IPR017441">
    <property type="entry name" value="Protein_kinase_ATP_BS"/>
</dbReference>
<dbReference type="InterPro" id="IPR008271">
    <property type="entry name" value="Ser/Thr_kinase_AS"/>
</dbReference>
<dbReference type="PANTHER" id="PTHR24056">
    <property type="entry name" value="CELL DIVISION PROTEIN KINASE"/>
    <property type="match status" value="1"/>
</dbReference>
<dbReference type="PANTHER" id="PTHR24056:SF570">
    <property type="entry name" value="CYCLIN-DEPENDENT KINASE 19"/>
    <property type="match status" value="1"/>
</dbReference>
<dbReference type="Pfam" id="PF00069">
    <property type="entry name" value="Pkinase"/>
    <property type="match status" value="1"/>
</dbReference>
<dbReference type="SMART" id="SM00220">
    <property type="entry name" value="S_TKc"/>
    <property type="match status" value="1"/>
</dbReference>
<dbReference type="SUPFAM" id="SSF56112">
    <property type="entry name" value="Protein kinase-like (PK-like)"/>
    <property type="match status" value="1"/>
</dbReference>
<dbReference type="PROSITE" id="PS00107">
    <property type="entry name" value="PROTEIN_KINASE_ATP"/>
    <property type="match status" value="1"/>
</dbReference>
<dbReference type="PROSITE" id="PS50011">
    <property type="entry name" value="PROTEIN_KINASE_DOM"/>
    <property type="match status" value="1"/>
</dbReference>
<dbReference type="PROSITE" id="PS00108">
    <property type="entry name" value="PROTEIN_KINASE_ST"/>
    <property type="match status" value="1"/>
</dbReference>
<accession>Q8BWD8</accession>
<accession>Q80TM1</accession>
<comment type="catalytic activity">
    <reaction>
        <text>L-seryl-[protein] + ATP = O-phospho-L-seryl-[protein] + ADP + H(+)</text>
        <dbReference type="Rhea" id="RHEA:17989"/>
        <dbReference type="Rhea" id="RHEA-COMP:9863"/>
        <dbReference type="Rhea" id="RHEA-COMP:11604"/>
        <dbReference type="ChEBI" id="CHEBI:15378"/>
        <dbReference type="ChEBI" id="CHEBI:29999"/>
        <dbReference type="ChEBI" id="CHEBI:30616"/>
        <dbReference type="ChEBI" id="CHEBI:83421"/>
        <dbReference type="ChEBI" id="CHEBI:456216"/>
        <dbReference type="EC" id="2.7.11.22"/>
    </reaction>
</comment>
<comment type="catalytic activity">
    <reaction>
        <text>L-threonyl-[protein] + ATP = O-phospho-L-threonyl-[protein] + ADP + H(+)</text>
        <dbReference type="Rhea" id="RHEA:46608"/>
        <dbReference type="Rhea" id="RHEA-COMP:11060"/>
        <dbReference type="Rhea" id="RHEA-COMP:11605"/>
        <dbReference type="ChEBI" id="CHEBI:15378"/>
        <dbReference type="ChEBI" id="CHEBI:30013"/>
        <dbReference type="ChEBI" id="CHEBI:30616"/>
        <dbReference type="ChEBI" id="CHEBI:61977"/>
        <dbReference type="ChEBI" id="CHEBI:456216"/>
        <dbReference type="EC" id="2.7.11.22"/>
    </reaction>
</comment>
<comment type="subcellular location">
    <subcellularLocation>
        <location evidence="1">Cytoplasm</location>
    </subcellularLocation>
    <subcellularLocation>
        <location evidence="1">Cytoplasm</location>
        <location evidence="1">Perinuclear region</location>
    </subcellularLocation>
    <subcellularLocation>
        <location evidence="1">Nucleus</location>
    </subcellularLocation>
</comment>
<comment type="similarity">
    <text evidence="5">Belongs to the protein kinase superfamily. CMGC Ser/Thr protein kinase family. CDC2/CDKX subfamily.</text>
</comment>
<comment type="sequence caution" evidence="5">
    <conflict type="erroneous initiation">
        <sequence resource="EMBL-CDS" id="BAC65703"/>
    </conflict>
</comment>
<name>CDK19_MOUSE</name>
<feature type="chain" id="PRO_0000085714" description="Cyclin-dependent kinase 19">
    <location>
        <begin position="1"/>
        <end position="501"/>
    </location>
</feature>
<feature type="domain" description="Protein kinase" evidence="2">
    <location>
        <begin position="21"/>
        <end position="335"/>
    </location>
</feature>
<feature type="region of interest" description="Disordered" evidence="4">
    <location>
        <begin position="362"/>
        <end position="501"/>
    </location>
</feature>
<feature type="compositionally biased region" description="Low complexity" evidence="4">
    <location>
        <begin position="371"/>
        <end position="392"/>
    </location>
</feature>
<feature type="compositionally biased region" description="Gly residues" evidence="4">
    <location>
        <begin position="408"/>
        <end position="421"/>
    </location>
</feature>
<feature type="compositionally biased region" description="Low complexity" evidence="4">
    <location>
        <begin position="467"/>
        <end position="495"/>
    </location>
</feature>
<feature type="active site" description="Proton acceptor" evidence="2 3">
    <location>
        <position position="151"/>
    </location>
</feature>
<feature type="binding site" evidence="2">
    <location>
        <begin position="27"/>
        <end position="35"/>
    </location>
    <ligand>
        <name>ATP</name>
        <dbReference type="ChEBI" id="CHEBI:30616"/>
    </ligand>
</feature>
<feature type="binding site" evidence="2">
    <location>
        <position position="52"/>
    </location>
    <ligand>
        <name>ATP</name>
        <dbReference type="ChEBI" id="CHEBI:30616"/>
    </ligand>
</feature>
<feature type="modified residue" description="N-acetylmethionine" evidence="1">
    <location>
        <position position="1"/>
    </location>
</feature>
<feature type="modified residue" description="Phosphoserine" evidence="1">
    <location>
        <position position="449"/>
    </location>
</feature>
<protein>
    <recommendedName>
        <fullName>Cyclin-dependent kinase 19</fullName>
        <ecNumber>2.7.11.22</ecNumber>
    </recommendedName>
    <alternativeName>
        <fullName>CDC2-related protein kinase 6</fullName>
    </alternativeName>
    <alternativeName>
        <fullName>Cell division cycle 2-like protein kinase 6</fullName>
    </alternativeName>
    <alternativeName>
        <fullName>Cell division protein kinase 19</fullName>
    </alternativeName>
</protein>
<gene>
    <name type="primary">Cdk19</name>
    <name type="synonym">Cdc2l6</name>
    <name type="synonym">Kiaa1028</name>
</gene>
<reference key="1">
    <citation type="journal article" date="2005" name="Science">
        <title>The transcriptional landscape of the mammalian genome.</title>
        <authorList>
            <person name="Carninci P."/>
            <person name="Kasukawa T."/>
            <person name="Katayama S."/>
            <person name="Gough J."/>
            <person name="Frith M.C."/>
            <person name="Maeda N."/>
            <person name="Oyama R."/>
            <person name="Ravasi T."/>
            <person name="Lenhard B."/>
            <person name="Wells C."/>
            <person name="Kodzius R."/>
            <person name="Shimokawa K."/>
            <person name="Bajic V.B."/>
            <person name="Brenner S.E."/>
            <person name="Batalov S."/>
            <person name="Forrest A.R."/>
            <person name="Zavolan M."/>
            <person name="Davis M.J."/>
            <person name="Wilming L.G."/>
            <person name="Aidinis V."/>
            <person name="Allen J.E."/>
            <person name="Ambesi-Impiombato A."/>
            <person name="Apweiler R."/>
            <person name="Aturaliya R.N."/>
            <person name="Bailey T.L."/>
            <person name="Bansal M."/>
            <person name="Baxter L."/>
            <person name="Beisel K.W."/>
            <person name="Bersano T."/>
            <person name="Bono H."/>
            <person name="Chalk A.M."/>
            <person name="Chiu K.P."/>
            <person name="Choudhary V."/>
            <person name="Christoffels A."/>
            <person name="Clutterbuck D.R."/>
            <person name="Crowe M.L."/>
            <person name="Dalla E."/>
            <person name="Dalrymple B.P."/>
            <person name="de Bono B."/>
            <person name="Della Gatta G."/>
            <person name="di Bernardo D."/>
            <person name="Down T."/>
            <person name="Engstrom P."/>
            <person name="Fagiolini M."/>
            <person name="Faulkner G."/>
            <person name="Fletcher C.F."/>
            <person name="Fukushima T."/>
            <person name="Furuno M."/>
            <person name="Futaki S."/>
            <person name="Gariboldi M."/>
            <person name="Georgii-Hemming P."/>
            <person name="Gingeras T.R."/>
            <person name="Gojobori T."/>
            <person name="Green R.E."/>
            <person name="Gustincich S."/>
            <person name="Harbers M."/>
            <person name="Hayashi Y."/>
            <person name="Hensch T.K."/>
            <person name="Hirokawa N."/>
            <person name="Hill D."/>
            <person name="Huminiecki L."/>
            <person name="Iacono M."/>
            <person name="Ikeo K."/>
            <person name="Iwama A."/>
            <person name="Ishikawa T."/>
            <person name="Jakt M."/>
            <person name="Kanapin A."/>
            <person name="Katoh M."/>
            <person name="Kawasawa Y."/>
            <person name="Kelso J."/>
            <person name="Kitamura H."/>
            <person name="Kitano H."/>
            <person name="Kollias G."/>
            <person name="Krishnan S.P."/>
            <person name="Kruger A."/>
            <person name="Kummerfeld S.K."/>
            <person name="Kurochkin I.V."/>
            <person name="Lareau L.F."/>
            <person name="Lazarevic D."/>
            <person name="Lipovich L."/>
            <person name="Liu J."/>
            <person name="Liuni S."/>
            <person name="McWilliam S."/>
            <person name="Madan Babu M."/>
            <person name="Madera M."/>
            <person name="Marchionni L."/>
            <person name="Matsuda H."/>
            <person name="Matsuzawa S."/>
            <person name="Miki H."/>
            <person name="Mignone F."/>
            <person name="Miyake S."/>
            <person name="Morris K."/>
            <person name="Mottagui-Tabar S."/>
            <person name="Mulder N."/>
            <person name="Nakano N."/>
            <person name="Nakauchi H."/>
            <person name="Ng P."/>
            <person name="Nilsson R."/>
            <person name="Nishiguchi S."/>
            <person name="Nishikawa S."/>
            <person name="Nori F."/>
            <person name="Ohara O."/>
            <person name="Okazaki Y."/>
            <person name="Orlando V."/>
            <person name="Pang K.C."/>
            <person name="Pavan W.J."/>
            <person name="Pavesi G."/>
            <person name="Pesole G."/>
            <person name="Petrovsky N."/>
            <person name="Piazza S."/>
            <person name="Reed J."/>
            <person name="Reid J.F."/>
            <person name="Ring B.Z."/>
            <person name="Ringwald M."/>
            <person name="Rost B."/>
            <person name="Ruan Y."/>
            <person name="Salzberg S.L."/>
            <person name="Sandelin A."/>
            <person name="Schneider C."/>
            <person name="Schoenbach C."/>
            <person name="Sekiguchi K."/>
            <person name="Semple C.A."/>
            <person name="Seno S."/>
            <person name="Sessa L."/>
            <person name="Sheng Y."/>
            <person name="Shibata Y."/>
            <person name="Shimada H."/>
            <person name="Shimada K."/>
            <person name="Silva D."/>
            <person name="Sinclair B."/>
            <person name="Sperling S."/>
            <person name="Stupka E."/>
            <person name="Sugiura K."/>
            <person name="Sultana R."/>
            <person name="Takenaka Y."/>
            <person name="Taki K."/>
            <person name="Tammoja K."/>
            <person name="Tan S.L."/>
            <person name="Tang S."/>
            <person name="Taylor M.S."/>
            <person name="Tegner J."/>
            <person name="Teichmann S.A."/>
            <person name="Ueda H.R."/>
            <person name="van Nimwegen E."/>
            <person name="Verardo R."/>
            <person name="Wei C.L."/>
            <person name="Yagi K."/>
            <person name="Yamanishi H."/>
            <person name="Zabarovsky E."/>
            <person name="Zhu S."/>
            <person name="Zimmer A."/>
            <person name="Hide W."/>
            <person name="Bult C."/>
            <person name="Grimmond S.M."/>
            <person name="Teasdale R.D."/>
            <person name="Liu E.T."/>
            <person name="Brusic V."/>
            <person name="Quackenbush J."/>
            <person name="Wahlestedt C."/>
            <person name="Mattick J.S."/>
            <person name="Hume D.A."/>
            <person name="Kai C."/>
            <person name="Sasaki D."/>
            <person name="Tomaru Y."/>
            <person name="Fukuda S."/>
            <person name="Kanamori-Katayama M."/>
            <person name="Suzuki M."/>
            <person name="Aoki J."/>
            <person name="Arakawa T."/>
            <person name="Iida J."/>
            <person name="Imamura K."/>
            <person name="Itoh M."/>
            <person name="Kato T."/>
            <person name="Kawaji H."/>
            <person name="Kawagashira N."/>
            <person name="Kawashima T."/>
            <person name="Kojima M."/>
            <person name="Kondo S."/>
            <person name="Konno H."/>
            <person name="Nakano K."/>
            <person name="Ninomiya N."/>
            <person name="Nishio T."/>
            <person name="Okada M."/>
            <person name="Plessy C."/>
            <person name="Shibata K."/>
            <person name="Shiraki T."/>
            <person name="Suzuki S."/>
            <person name="Tagami M."/>
            <person name="Waki K."/>
            <person name="Watahiki A."/>
            <person name="Okamura-Oho Y."/>
            <person name="Suzuki H."/>
            <person name="Kawai J."/>
            <person name="Hayashizaki Y."/>
        </authorList>
    </citation>
    <scope>NUCLEOTIDE SEQUENCE [LARGE SCALE MRNA]</scope>
    <source>
        <strain>C57BL/6J</strain>
        <tissue>Mammary gland</tissue>
    </source>
</reference>
<reference key="2">
    <citation type="journal article" date="2003" name="DNA Res.">
        <title>Prediction of the coding sequences of mouse homologues of KIAA gene: II. The complete nucleotide sequences of 400 mouse KIAA-homologous cDNAs identified by screening of terminal sequences of cDNA clones randomly sampled from size-fractionated libraries.</title>
        <authorList>
            <person name="Okazaki N."/>
            <person name="Kikuno R."/>
            <person name="Ohara R."/>
            <person name="Inamoto S."/>
            <person name="Aizawa H."/>
            <person name="Yuasa S."/>
            <person name="Nakajima D."/>
            <person name="Nagase T."/>
            <person name="Ohara O."/>
            <person name="Koga H."/>
        </authorList>
    </citation>
    <scope>NUCLEOTIDE SEQUENCE [LARGE SCALE MRNA]</scope>
    <source>
        <tissue>Brain</tissue>
    </source>
</reference>
<proteinExistence type="evidence at transcript level"/>
<sequence>MDYDFKAKLAAERERVEDLFEYEGCKVGRGTYGHVYKARRKDGKDEKEYALKQIEGTGISMSACREIALLRELKHPNVIALQKVFLSHSDRKVWLLFDYAEHDLWHIIKFHRASKANKKPMQLPRSMVKSLLYQILDGIHYLHANWVLHRDLKPANILVMGEGPERGRVKIADMGFARLFNSPLKPLADLDPVVVTFWYRAPELLLGARHYTKAIDIWAIGCIFAELLTSEPIFHCRQEDIKTSNPFHHDQLDRIFSVMGFPADKDWEDIRKMPEYPTLQKDFRRTTYANSSLIKYMEKHKVKPDSKVFLLLQKLLTMDPTKRITSEQALQDPYFQEDPLPTLDVFAGCQIPYPKREFLNEDEPEEKGDKNQPQQQNPHQQPAAPAQQTAAPPQAPPPQQSSAQTNGTAGGATAGGGGAGAGLQHSQDPGLNQVPPNKKPRIGPSGANSGGPVMPSDYQHSSSRLNYQSSVQGSSQSQSTLGYSSSQQSTQYHSSHQTHRY</sequence>